<proteinExistence type="inferred from homology"/>
<dbReference type="EMBL" id="AF525171">
    <property type="protein sequence ID" value="AAM91944.2"/>
    <property type="molecule type" value="Genomic_DNA"/>
</dbReference>
<dbReference type="EMBL" id="CH408156">
    <property type="protein sequence ID" value="EDK37347.2"/>
    <property type="molecule type" value="Genomic_DNA"/>
</dbReference>
<dbReference type="RefSeq" id="XP_001485774.1">
    <property type="nucleotide sequence ID" value="XM_001485724.1"/>
</dbReference>
<dbReference type="SMR" id="A5DDU4"/>
<dbReference type="FunCoup" id="A5DDU4">
    <property type="interactions" value="715"/>
</dbReference>
<dbReference type="STRING" id="294746.A5DDU4"/>
<dbReference type="GeneID" id="5127596"/>
<dbReference type="KEGG" id="pgu:PGUG_01445"/>
<dbReference type="VEuPathDB" id="FungiDB:PGUG_01445"/>
<dbReference type="eggNOG" id="KOG0867">
    <property type="taxonomic scope" value="Eukaryota"/>
</dbReference>
<dbReference type="HOGENOM" id="CLU_011226_14_1_1"/>
<dbReference type="InParanoid" id="A5DDU4"/>
<dbReference type="OMA" id="YEPHRID"/>
<dbReference type="OrthoDB" id="422574at2759"/>
<dbReference type="Proteomes" id="UP000001997">
    <property type="component" value="Unassembled WGS sequence"/>
</dbReference>
<dbReference type="GO" id="GO:0005737">
    <property type="term" value="C:cytoplasm"/>
    <property type="evidence" value="ECO:0007669"/>
    <property type="project" value="EnsemblFungi"/>
</dbReference>
<dbReference type="GO" id="GO:0004602">
    <property type="term" value="F:glutathione peroxidase activity"/>
    <property type="evidence" value="ECO:0007669"/>
    <property type="project" value="EnsemblFungi"/>
</dbReference>
<dbReference type="GO" id="GO:0051219">
    <property type="term" value="F:phosphoprotein binding"/>
    <property type="evidence" value="ECO:0007669"/>
    <property type="project" value="EnsemblFungi"/>
</dbReference>
<dbReference type="GO" id="GO:0003714">
    <property type="term" value="F:transcription corepressor activity"/>
    <property type="evidence" value="ECO:0007669"/>
    <property type="project" value="InterPro"/>
</dbReference>
<dbReference type="GO" id="GO:0010621">
    <property type="term" value="P:negative regulation of transcription by transcription factor localization"/>
    <property type="evidence" value="ECO:0007669"/>
    <property type="project" value="EnsemblFungi"/>
</dbReference>
<dbReference type="GO" id="GO:0042128">
    <property type="term" value="P:nitrate assimilation"/>
    <property type="evidence" value="ECO:0007669"/>
    <property type="project" value="UniProtKB-KW"/>
</dbReference>
<dbReference type="GO" id="GO:0032447">
    <property type="term" value="P:protein urmylation"/>
    <property type="evidence" value="ECO:0007669"/>
    <property type="project" value="EnsemblFungi"/>
</dbReference>
<dbReference type="GO" id="GO:0006808">
    <property type="term" value="P:regulation of nitrogen utilization"/>
    <property type="evidence" value="ECO:0007669"/>
    <property type="project" value="EnsemblFungi"/>
</dbReference>
<dbReference type="CDD" id="cd03048">
    <property type="entry name" value="GST_N_Ure2p_like"/>
    <property type="match status" value="1"/>
</dbReference>
<dbReference type="FunFam" id="1.20.1050.10:FF:000034">
    <property type="entry name" value="Transcriptional regulator URE2"/>
    <property type="match status" value="1"/>
</dbReference>
<dbReference type="Gene3D" id="1.20.1050.10">
    <property type="match status" value="1"/>
</dbReference>
<dbReference type="Gene3D" id="3.40.30.10">
    <property type="entry name" value="Glutaredoxin"/>
    <property type="match status" value="1"/>
</dbReference>
<dbReference type="InterPro" id="IPR010987">
    <property type="entry name" value="Glutathione-S-Trfase_C-like"/>
</dbReference>
<dbReference type="InterPro" id="IPR036282">
    <property type="entry name" value="Glutathione-S-Trfase_C_sf"/>
</dbReference>
<dbReference type="InterPro" id="IPR040079">
    <property type="entry name" value="Glutathione_S-Trfase"/>
</dbReference>
<dbReference type="InterPro" id="IPR004045">
    <property type="entry name" value="Glutathione_S-Trfase_N"/>
</dbReference>
<dbReference type="InterPro" id="IPR004046">
    <property type="entry name" value="GST_C"/>
</dbReference>
<dbReference type="InterPro" id="IPR036249">
    <property type="entry name" value="Thioredoxin-like_sf"/>
</dbReference>
<dbReference type="InterPro" id="IPR017298">
    <property type="entry name" value="Ure2"/>
</dbReference>
<dbReference type="PANTHER" id="PTHR44051">
    <property type="entry name" value="GLUTATHIONE S-TRANSFERASE-RELATED"/>
    <property type="match status" value="1"/>
</dbReference>
<dbReference type="PANTHER" id="PTHR44051:SF3">
    <property type="entry name" value="TRANSCRIPTIONAL REGULATOR URE2"/>
    <property type="match status" value="1"/>
</dbReference>
<dbReference type="Pfam" id="PF00043">
    <property type="entry name" value="GST_C"/>
    <property type="match status" value="1"/>
</dbReference>
<dbReference type="Pfam" id="PF02798">
    <property type="entry name" value="GST_N"/>
    <property type="match status" value="1"/>
</dbReference>
<dbReference type="PIRSF" id="PIRSF037861">
    <property type="entry name" value="Prion_URE2"/>
    <property type="match status" value="1"/>
</dbReference>
<dbReference type="SFLD" id="SFLDS00019">
    <property type="entry name" value="Glutathione_Transferase_(cytos"/>
    <property type="match status" value="1"/>
</dbReference>
<dbReference type="SFLD" id="SFLDG00358">
    <property type="entry name" value="Main_(cytGST)"/>
    <property type="match status" value="1"/>
</dbReference>
<dbReference type="SUPFAM" id="SSF47616">
    <property type="entry name" value="GST C-terminal domain-like"/>
    <property type="match status" value="1"/>
</dbReference>
<dbReference type="SUPFAM" id="SSF52833">
    <property type="entry name" value="Thioredoxin-like"/>
    <property type="match status" value="1"/>
</dbReference>
<dbReference type="PROSITE" id="PS50405">
    <property type="entry name" value="GST_CTER"/>
    <property type="match status" value="1"/>
</dbReference>
<dbReference type="PROSITE" id="PS50404">
    <property type="entry name" value="GST_NTER"/>
    <property type="match status" value="1"/>
</dbReference>
<reference key="1">
    <citation type="journal article" date="2002" name="Proc. Natl. Acad. Sci. U.S.A.">
        <title>Conservation of a portion of the S. cerevisiae Ure2p prion domain that interacts with the full-length protein.</title>
        <authorList>
            <person name="Edskes H.K."/>
            <person name="Wickner R.B."/>
        </authorList>
    </citation>
    <scope>NUCLEOTIDE SEQUENCE [GENOMIC DNA]</scope>
    <source>
        <strain>B3163</strain>
    </source>
</reference>
<reference key="2">
    <citation type="journal article" date="2009" name="Nature">
        <title>Evolution of pathogenicity and sexual reproduction in eight Candida genomes.</title>
        <authorList>
            <person name="Butler G."/>
            <person name="Rasmussen M.D."/>
            <person name="Lin M.F."/>
            <person name="Santos M.A.S."/>
            <person name="Sakthikumar S."/>
            <person name="Munro C.A."/>
            <person name="Rheinbay E."/>
            <person name="Grabherr M."/>
            <person name="Forche A."/>
            <person name="Reedy J.L."/>
            <person name="Agrafioti I."/>
            <person name="Arnaud M.B."/>
            <person name="Bates S."/>
            <person name="Brown A.J.P."/>
            <person name="Brunke S."/>
            <person name="Costanzo M.C."/>
            <person name="Fitzpatrick D.A."/>
            <person name="de Groot P.W.J."/>
            <person name="Harris D."/>
            <person name="Hoyer L.L."/>
            <person name="Hube B."/>
            <person name="Klis F.M."/>
            <person name="Kodira C."/>
            <person name="Lennard N."/>
            <person name="Logue M.E."/>
            <person name="Martin R."/>
            <person name="Neiman A.M."/>
            <person name="Nikolaou E."/>
            <person name="Quail M.A."/>
            <person name="Quinn J."/>
            <person name="Santos M.C."/>
            <person name="Schmitzberger F.F."/>
            <person name="Sherlock G."/>
            <person name="Shah P."/>
            <person name="Silverstein K.A.T."/>
            <person name="Skrzypek M.S."/>
            <person name="Soll D."/>
            <person name="Staggs R."/>
            <person name="Stansfield I."/>
            <person name="Stumpf M.P.H."/>
            <person name="Sudbery P.E."/>
            <person name="Srikantha T."/>
            <person name="Zeng Q."/>
            <person name="Berman J."/>
            <person name="Berriman M."/>
            <person name="Heitman J."/>
            <person name="Gow N.A.R."/>
            <person name="Lorenz M.C."/>
            <person name="Birren B.W."/>
            <person name="Kellis M."/>
            <person name="Cuomo C.A."/>
        </authorList>
    </citation>
    <scope>NUCLEOTIDE SEQUENCE [LARGE SCALE GENOMIC DNA]</scope>
    <source>
        <strain>ATCC 6260 / CBS 566 / DSM 6381 / JCM 1539 / NBRC 10279 / NRRL Y-324</strain>
    </source>
</reference>
<gene>
    <name type="primary">URE2</name>
    <name type="ORF">PGUG_01445</name>
</gene>
<comment type="function">
    <text evidence="1">Plays an important role in the cellular response to the nitrogen source. URE2 gene plays a major part in the repression of GLN1 and GDH2 genes by glutamine, and is required for the inactivation of glutamine synthetase. URE2 gene product may catalytically inactivate GLN3 in response to an increase in the intracellular concentration of glutamine (By similarity).</text>
</comment>
<comment type="subunit">
    <text evidence="1">Homodimer.</text>
</comment>
<comment type="similarity">
    <text evidence="2">Belongs to the GST superfamily.</text>
</comment>
<organism>
    <name type="scientific">Meyerozyma guilliermondii (strain ATCC 6260 / CBS 566 / DSM 6381 / JCM 1539 / NBRC 10279 / NRRL Y-324)</name>
    <name type="common">Yeast</name>
    <name type="synonym">Candida guilliermondii</name>
    <dbReference type="NCBI Taxonomy" id="294746"/>
    <lineage>
        <taxon>Eukaryota</taxon>
        <taxon>Fungi</taxon>
        <taxon>Dikarya</taxon>
        <taxon>Ascomycota</taxon>
        <taxon>Saccharomycotina</taxon>
        <taxon>Pichiomycetes</taxon>
        <taxon>Debaryomycetaceae</taxon>
        <taxon>Meyerozyma</taxon>
    </lineage>
</organism>
<evidence type="ECO:0000250" key="1"/>
<evidence type="ECO:0000305" key="2"/>
<name>URE2_PICGU</name>
<keyword id="KW-0534">Nitrate assimilation</keyword>
<keyword id="KW-1185">Reference proteome</keyword>
<protein>
    <recommendedName>
        <fullName>Protein URE2</fullName>
    </recommendedName>
</protein>
<feature type="chain" id="PRO_0000295038" description="Protein URE2">
    <location>
        <begin position="1"/>
        <end position="301"/>
    </location>
</feature>
<feature type="domain" description="GST N-terminal">
    <location>
        <begin position="59"/>
        <end position="143"/>
    </location>
</feature>
<feature type="domain" description="GST C-terminal">
    <location>
        <begin position="152"/>
        <end position="301"/>
    </location>
</feature>
<accession>A5DDU4</accession>
<accession>Q8NJR1</accession>
<sequence>MSGAHTISHLSAGLKSVNIGDQQQNEANLNLLQQQLENEATSQTQQSRITQFFAQQPSDGYTLFSHRSAPNGFKVAIILSELELPFNTIFLDFNHGEQRAPEFVTINPNARVPALIDHFNDNTSIWESGAIILYLVSKYLRDNGECALWSDNIVEQSQISSWLFFQTSGHAPMIGQALHFRYFHSCPVPSAVERYTDEVRRVYGVIEMALAERREALIMDLDVENAAAYSAGTTPLSQSRYFDYPVWLVGDRATVADLSFVPWNNVVDRIGINLKVEFPEVYKWTKYMMRRPAVIRALRGD</sequence>